<organism>
    <name type="scientific">Brucella canis (strain ATCC 23365 / NCTC 10854 / RM-666)</name>
    <dbReference type="NCBI Taxonomy" id="483179"/>
    <lineage>
        <taxon>Bacteria</taxon>
        <taxon>Pseudomonadati</taxon>
        <taxon>Pseudomonadota</taxon>
        <taxon>Alphaproteobacteria</taxon>
        <taxon>Hyphomicrobiales</taxon>
        <taxon>Brucellaceae</taxon>
        <taxon>Brucella/Ochrobactrum group</taxon>
        <taxon>Brucella</taxon>
    </lineage>
</organism>
<accession>A9M5N9</accession>
<name>RL24_BRUC2</name>
<evidence type="ECO:0000255" key="1">
    <source>
        <dbReference type="HAMAP-Rule" id="MF_01326"/>
    </source>
</evidence>
<evidence type="ECO:0000305" key="2"/>
<sequence length="103" mass="11208">MQKIRKGDSVVVLSGKDKGRKGEVLKVMPKDEQALVSGINIVKRHQRQTQTQEAGIISKEAPIHLSNLAIADPKDGKPTRVGFRVEDGKKVRVAKRSGALIDG</sequence>
<keyword id="KW-1185">Reference proteome</keyword>
<keyword id="KW-0687">Ribonucleoprotein</keyword>
<keyword id="KW-0689">Ribosomal protein</keyword>
<keyword id="KW-0694">RNA-binding</keyword>
<keyword id="KW-0699">rRNA-binding</keyword>
<gene>
    <name evidence="1" type="primary">rplX</name>
    <name type="ordered locus">BCAN_A1245</name>
</gene>
<reference key="1">
    <citation type="submission" date="2007-10" db="EMBL/GenBank/DDBJ databases">
        <title>Brucella canis ATCC 23365 whole genome shotgun sequencing project.</title>
        <authorList>
            <person name="Setubal J.C."/>
            <person name="Bowns C."/>
            <person name="Boyle S."/>
            <person name="Crasta O.R."/>
            <person name="Czar M.J."/>
            <person name="Dharmanolla C."/>
            <person name="Gillespie J.J."/>
            <person name="Kenyon R.W."/>
            <person name="Lu J."/>
            <person name="Mane S."/>
            <person name="Mohapatra S."/>
            <person name="Nagrani S."/>
            <person name="Purkayastha A."/>
            <person name="Rajasimha H.K."/>
            <person name="Shallom J.M."/>
            <person name="Shallom S."/>
            <person name="Shukla M."/>
            <person name="Snyder E.E."/>
            <person name="Sobral B.W."/>
            <person name="Wattam A.R."/>
            <person name="Will R."/>
            <person name="Williams K."/>
            <person name="Yoo H."/>
            <person name="Bruce D."/>
            <person name="Detter C."/>
            <person name="Munk C."/>
            <person name="Brettin T.S."/>
        </authorList>
    </citation>
    <scope>NUCLEOTIDE SEQUENCE [LARGE SCALE GENOMIC DNA]</scope>
    <source>
        <strain>ATCC 23365 / NCTC 10854 / RM-666</strain>
    </source>
</reference>
<feature type="chain" id="PRO_1000086471" description="Large ribosomal subunit protein uL24">
    <location>
        <begin position="1"/>
        <end position="103"/>
    </location>
</feature>
<dbReference type="EMBL" id="CP000872">
    <property type="protein sequence ID" value="ABX62294.1"/>
    <property type="molecule type" value="Genomic_DNA"/>
</dbReference>
<dbReference type="RefSeq" id="WP_002964351.1">
    <property type="nucleotide sequence ID" value="NC_010103.1"/>
</dbReference>
<dbReference type="SMR" id="A9M5N9"/>
<dbReference type="GeneID" id="97533535"/>
<dbReference type="KEGG" id="bcs:BCAN_A1245"/>
<dbReference type="HOGENOM" id="CLU_093315_2_2_5"/>
<dbReference type="PhylomeDB" id="A9M5N9"/>
<dbReference type="Proteomes" id="UP000001385">
    <property type="component" value="Chromosome I"/>
</dbReference>
<dbReference type="GO" id="GO:1990904">
    <property type="term" value="C:ribonucleoprotein complex"/>
    <property type="evidence" value="ECO:0007669"/>
    <property type="project" value="UniProtKB-KW"/>
</dbReference>
<dbReference type="GO" id="GO:0005840">
    <property type="term" value="C:ribosome"/>
    <property type="evidence" value="ECO:0007669"/>
    <property type="project" value="UniProtKB-KW"/>
</dbReference>
<dbReference type="GO" id="GO:0019843">
    <property type="term" value="F:rRNA binding"/>
    <property type="evidence" value="ECO:0007669"/>
    <property type="project" value="UniProtKB-UniRule"/>
</dbReference>
<dbReference type="GO" id="GO:0003735">
    <property type="term" value="F:structural constituent of ribosome"/>
    <property type="evidence" value="ECO:0007669"/>
    <property type="project" value="InterPro"/>
</dbReference>
<dbReference type="GO" id="GO:0006412">
    <property type="term" value="P:translation"/>
    <property type="evidence" value="ECO:0007669"/>
    <property type="project" value="UniProtKB-UniRule"/>
</dbReference>
<dbReference type="CDD" id="cd06089">
    <property type="entry name" value="KOW_RPL26"/>
    <property type="match status" value="1"/>
</dbReference>
<dbReference type="FunFam" id="2.30.30.30:FF:000004">
    <property type="entry name" value="50S ribosomal protein L24"/>
    <property type="match status" value="1"/>
</dbReference>
<dbReference type="Gene3D" id="2.30.30.30">
    <property type="match status" value="1"/>
</dbReference>
<dbReference type="HAMAP" id="MF_01326_B">
    <property type="entry name" value="Ribosomal_uL24_B"/>
    <property type="match status" value="1"/>
</dbReference>
<dbReference type="InterPro" id="IPR005824">
    <property type="entry name" value="KOW"/>
</dbReference>
<dbReference type="InterPro" id="IPR014722">
    <property type="entry name" value="Rib_uL2_dom2"/>
</dbReference>
<dbReference type="InterPro" id="IPR003256">
    <property type="entry name" value="Ribosomal_uL24"/>
</dbReference>
<dbReference type="InterPro" id="IPR005825">
    <property type="entry name" value="Ribosomal_uL24_CS"/>
</dbReference>
<dbReference type="InterPro" id="IPR041988">
    <property type="entry name" value="Ribosomal_uL24_KOW"/>
</dbReference>
<dbReference type="InterPro" id="IPR008991">
    <property type="entry name" value="Translation_prot_SH3-like_sf"/>
</dbReference>
<dbReference type="NCBIfam" id="TIGR01079">
    <property type="entry name" value="rplX_bact"/>
    <property type="match status" value="1"/>
</dbReference>
<dbReference type="PANTHER" id="PTHR12903">
    <property type="entry name" value="MITOCHONDRIAL RIBOSOMAL PROTEIN L24"/>
    <property type="match status" value="1"/>
</dbReference>
<dbReference type="Pfam" id="PF00467">
    <property type="entry name" value="KOW"/>
    <property type="match status" value="1"/>
</dbReference>
<dbReference type="Pfam" id="PF17136">
    <property type="entry name" value="ribosomal_L24"/>
    <property type="match status" value="1"/>
</dbReference>
<dbReference type="SMART" id="SM00739">
    <property type="entry name" value="KOW"/>
    <property type="match status" value="1"/>
</dbReference>
<dbReference type="SUPFAM" id="SSF50104">
    <property type="entry name" value="Translation proteins SH3-like domain"/>
    <property type="match status" value="1"/>
</dbReference>
<dbReference type="PROSITE" id="PS01108">
    <property type="entry name" value="RIBOSOMAL_L24"/>
    <property type="match status" value="1"/>
</dbReference>
<proteinExistence type="inferred from homology"/>
<protein>
    <recommendedName>
        <fullName evidence="1">Large ribosomal subunit protein uL24</fullName>
    </recommendedName>
    <alternativeName>
        <fullName evidence="2">50S ribosomal protein L24</fullName>
    </alternativeName>
</protein>
<comment type="function">
    <text evidence="1">One of two assembly initiator proteins, it binds directly to the 5'-end of the 23S rRNA, where it nucleates assembly of the 50S subunit.</text>
</comment>
<comment type="function">
    <text evidence="1">One of the proteins that surrounds the polypeptide exit tunnel on the outside of the subunit.</text>
</comment>
<comment type="subunit">
    <text evidence="1">Part of the 50S ribosomal subunit.</text>
</comment>
<comment type="similarity">
    <text evidence="1">Belongs to the universal ribosomal protein uL24 family.</text>
</comment>